<accession>Q7NMG4</accession>
<dbReference type="EC" id="2.4.2.29" evidence="1"/>
<dbReference type="EMBL" id="BA000045">
    <property type="protein sequence ID" value="BAC88743.1"/>
    <property type="molecule type" value="Genomic_DNA"/>
</dbReference>
<dbReference type="RefSeq" id="NP_923748.1">
    <property type="nucleotide sequence ID" value="NC_005125.1"/>
</dbReference>
<dbReference type="RefSeq" id="WP_011140804.1">
    <property type="nucleotide sequence ID" value="NC_005125.1"/>
</dbReference>
<dbReference type="SMR" id="Q7NMG4"/>
<dbReference type="STRING" id="251221.gene:10758279"/>
<dbReference type="EnsemblBacteria" id="BAC88743">
    <property type="protein sequence ID" value="BAC88743"/>
    <property type="gene ID" value="BAC88743"/>
</dbReference>
<dbReference type="KEGG" id="gvi:glr0802"/>
<dbReference type="PATRIC" id="fig|251221.4.peg.819"/>
<dbReference type="eggNOG" id="COG0343">
    <property type="taxonomic scope" value="Bacteria"/>
</dbReference>
<dbReference type="HOGENOM" id="CLU_022060_0_1_3"/>
<dbReference type="InParanoid" id="Q7NMG4"/>
<dbReference type="OrthoDB" id="9805417at2"/>
<dbReference type="PhylomeDB" id="Q7NMG4"/>
<dbReference type="UniPathway" id="UPA00392"/>
<dbReference type="Proteomes" id="UP000000557">
    <property type="component" value="Chromosome"/>
</dbReference>
<dbReference type="GO" id="GO:0005737">
    <property type="term" value="C:cytoplasm"/>
    <property type="evidence" value="ECO:0000318"/>
    <property type="project" value="GO_Central"/>
</dbReference>
<dbReference type="GO" id="GO:0005829">
    <property type="term" value="C:cytosol"/>
    <property type="evidence" value="ECO:0000318"/>
    <property type="project" value="GO_Central"/>
</dbReference>
<dbReference type="GO" id="GO:0046872">
    <property type="term" value="F:metal ion binding"/>
    <property type="evidence" value="ECO:0007669"/>
    <property type="project" value="UniProtKB-KW"/>
</dbReference>
<dbReference type="GO" id="GO:0008479">
    <property type="term" value="F:tRNA-guanosine(34) queuine transglycosylase activity"/>
    <property type="evidence" value="ECO:0007669"/>
    <property type="project" value="UniProtKB-UniRule"/>
</dbReference>
<dbReference type="GO" id="GO:0008616">
    <property type="term" value="P:queuosine biosynthetic process"/>
    <property type="evidence" value="ECO:0000318"/>
    <property type="project" value="GO_Central"/>
</dbReference>
<dbReference type="GO" id="GO:0002099">
    <property type="term" value="P:tRNA wobble guanine modification"/>
    <property type="evidence" value="ECO:0000318"/>
    <property type="project" value="GO_Central"/>
</dbReference>
<dbReference type="GO" id="GO:0101030">
    <property type="term" value="P:tRNA-guanine transglycosylation"/>
    <property type="evidence" value="ECO:0007669"/>
    <property type="project" value="InterPro"/>
</dbReference>
<dbReference type="FunFam" id="3.20.20.105:FF:000001">
    <property type="entry name" value="Queuine tRNA-ribosyltransferase"/>
    <property type="match status" value="1"/>
</dbReference>
<dbReference type="Gene3D" id="3.20.20.105">
    <property type="entry name" value="Queuine tRNA-ribosyltransferase-like"/>
    <property type="match status" value="1"/>
</dbReference>
<dbReference type="HAMAP" id="MF_00168">
    <property type="entry name" value="Q_tRNA_Tgt"/>
    <property type="match status" value="1"/>
</dbReference>
<dbReference type="InterPro" id="IPR050076">
    <property type="entry name" value="ArchSynthase1/Queuine_TRR"/>
</dbReference>
<dbReference type="InterPro" id="IPR004803">
    <property type="entry name" value="TGT"/>
</dbReference>
<dbReference type="InterPro" id="IPR036511">
    <property type="entry name" value="TGT-like_sf"/>
</dbReference>
<dbReference type="InterPro" id="IPR002616">
    <property type="entry name" value="tRNA_ribo_trans-like"/>
</dbReference>
<dbReference type="NCBIfam" id="TIGR00430">
    <property type="entry name" value="Q_tRNA_tgt"/>
    <property type="match status" value="1"/>
</dbReference>
<dbReference type="NCBIfam" id="TIGR00449">
    <property type="entry name" value="tgt_general"/>
    <property type="match status" value="1"/>
</dbReference>
<dbReference type="PANTHER" id="PTHR46499">
    <property type="entry name" value="QUEUINE TRNA-RIBOSYLTRANSFERASE"/>
    <property type="match status" value="1"/>
</dbReference>
<dbReference type="PANTHER" id="PTHR46499:SF1">
    <property type="entry name" value="QUEUINE TRNA-RIBOSYLTRANSFERASE"/>
    <property type="match status" value="1"/>
</dbReference>
<dbReference type="Pfam" id="PF01702">
    <property type="entry name" value="TGT"/>
    <property type="match status" value="1"/>
</dbReference>
<dbReference type="SUPFAM" id="SSF51713">
    <property type="entry name" value="tRNA-guanine transglycosylase"/>
    <property type="match status" value="1"/>
</dbReference>
<organism>
    <name type="scientific">Gloeobacter violaceus (strain ATCC 29082 / PCC 7421)</name>
    <dbReference type="NCBI Taxonomy" id="251221"/>
    <lineage>
        <taxon>Bacteria</taxon>
        <taxon>Bacillati</taxon>
        <taxon>Cyanobacteriota</taxon>
        <taxon>Cyanophyceae</taxon>
        <taxon>Gloeobacterales</taxon>
        <taxon>Gloeobacteraceae</taxon>
        <taxon>Gloeobacter</taxon>
    </lineage>
</organism>
<evidence type="ECO:0000255" key="1">
    <source>
        <dbReference type="HAMAP-Rule" id="MF_00168"/>
    </source>
</evidence>
<name>TGT_GLOVI</name>
<feature type="chain" id="PRO_0000135479" description="Queuine tRNA-ribosyltransferase">
    <location>
        <begin position="1"/>
        <end position="378"/>
    </location>
</feature>
<feature type="region of interest" description="RNA binding" evidence="1">
    <location>
        <begin position="247"/>
        <end position="253"/>
    </location>
</feature>
<feature type="region of interest" description="RNA binding; important for wobble base 34 recognition" evidence="1">
    <location>
        <begin position="271"/>
        <end position="275"/>
    </location>
</feature>
<feature type="active site" description="Proton acceptor" evidence="1">
    <location>
        <position position="93"/>
    </location>
</feature>
<feature type="active site" description="Nucleophile" evidence="1">
    <location>
        <position position="266"/>
    </location>
</feature>
<feature type="binding site" evidence="1">
    <location>
        <begin position="93"/>
        <end position="97"/>
    </location>
    <ligand>
        <name>substrate</name>
    </ligand>
</feature>
<feature type="binding site" evidence="1">
    <location>
        <position position="147"/>
    </location>
    <ligand>
        <name>substrate</name>
    </ligand>
</feature>
<feature type="binding site" evidence="1">
    <location>
        <position position="189"/>
    </location>
    <ligand>
        <name>substrate</name>
    </ligand>
</feature>
<feature type="binding site" evidence="1">
    <location>
        <position position="216"/>
    </location>
    <ligand>
        <name>substrate</name>
    </ligand>
</feature>
<feature type="binding site" evidence="1">
    <location>
        <position position="308"/>
    </location>
    <ligand>
        <name>Zn(2+)</name>
        <dbReference type="ChEBI" id="CHEBI:29105"/>
    </ligand>
</feature>
<feature type="binding site" evidence="1">
    <location>
        <position position="310"/>
    </location>
    <ligand>
        <name>Zn(2+)</name>
        <dbReference type="ChEBI" id="CHEBI:29105"/>
    </ligand>
</feature>
<feature type="binding site" evidence="1">
    <location>
        <position position="313"/>
    </location>
    <ligand>
        <name>Zn(2+)</name>
        <dbReference type="ChEBI" id="CHEBI:29105"/>
    </ligand>
</feature>
<feature type="binding site" evidence="1">
    <location>
        <position position="339"/>
    </location>
    <ligand>
        <name>Zn(2+)</name>
        <dbReference type="ChEBI" id="CHEBI:29105"/>
    </ligand>
</feature>
<keyword id="KW-0328">Glycosyltransferase</keyword>
<keyword id="KW-0479">Metal-binding</keyword>
<keyword id="KW-0671">Queuosine biosynthesis</keyword>
<keyword id="KW-1185">Reference proteome</keyword>
<keyword id="KW-0808">Transferase</keyword>
<keyword id="KW-0819">tRNA processing</keyword>
<keyword id="KW-0862">Zinc</keyword>
<comment type="function">
    <text evidence="1">Catalyzes the base-exchange of a guanine (G) residue with the queuine precursor 7-aminomethyl-7-deazaguanine (PreQ1) at position 34 (anticodon wobble position) in tRNAs with GU(N) anticodons (tRNA-Asp, -Asn, -His and -Tyr). Catalysis occurs through a double-displacement mechanism. The nucleophile active site attacks the C1' of nucleotide 34 to detach the guanine base from the RNA, forming a covalent enzyme-RNA intermediate. The proton acceptor active site deprotonates the incoming PreQ1, allowing a nucleophilic attack on the C1' of the ribose to form the product. After dissociation, two additional enzymatic reactions on the tRNA convert PreQ1 to queuine (Q), resulting in the hypermodified nucleoside queuosine (7-(((4,5-cis-dihydroxy-2-cyclopenten-1-yl)amino)methyl)-7-deazaguanosine).</text>
</comment>
<comment type="catalytic activity">
    <reaction evidence="1">
        <text>7-aminomethyl-7-carbaguanine + guanosine(34) in tRNA = 7-aminomethyl-7-carbaguanosine(34) in tRNA + guanine</text>
        <dbReference type="Rhea" id="RHEA:24104"/>
        <dbReference type="Rhea" id="RHEA-COMP:10341"/>
        <dbReference type="Rhea" id="RHEA-COMP:10342"/>
        <dbReference type="ChEBI" id="CHEBI:16235"/>
        <dbReference type="ChEBI" id="CHEBI:58703"/>
        <dbReference type="ChEBI" id="CHEBI:74269"/>
        <dbReference type="ChEBI" id="CHEBI:82833"/>
        <dbReference type="EC" id="2.4.2.29"/>
    </reaction>
</comment>
<comment type="cofactor">
    <cofactor evidence="1">
        <name>Zn(2+)</name>
        <dbReference type="ChEBI" id="CHEBI:29105"/>
    </cofactor>
    <text evidence="1">Binds 1 zinc ion per subunit.</text>
</comment>
<comment type="pathway">
    <text evidence="1">tRNA modification; tRNA-queuosine biosynthesis.</text>
</comment>
<comment type="subunit">
    <text evidence="1">Homodimer. Within each dimer, one monomer is responsible for RNA recognition and catalysis, while the other monomer binds to the replacement base PreQ1.</text>
</comment>
<comment type="similarity">
    <text evidence="1">Belongs to the queuine tRNA-ribosyltransferase family.</text>
</comment>
<proteinExistence type="inferred from homology"/>
<sequence length="378" mass="41054">MTASFAFTIEHRDGEARAGTFATPHGPVYTPCFMPVGTQATVKTLTPAQLAETGAQMILANTYHLSLQPGADIVAGAGGLHGFMQWPGPILTDSGGFQVFSLSSLRTIDDDGVTFREPKSGALVRFTPEHAVAVQNALGADVIMAFDECPPYPADREQVEGAVERTLRWFERCVEAHRRSDQALFGIVQGGVWPDLRRRCAEGLVAADLPGYAIGGVSVGEPQTLIERVVRVTAPLLPEHKPRYLMGVGTFREMAQAVAVGVDLFDCVMPTRVARHGSALLLGTGGDRRINLKNAQFRRDYEPLDCVCPCYTCRHFSRAYLAHLVRSEEILAMTLLSIHNVATLTRFAALLRCAIATGSFAQEFAHYLQSGPEPVLSN</sequence>
<gene>
    <name evidence="1" type="primary">tgt</name>
    <name type="ordered locus">glr0802</name>
</gene>
<reference key="1">
    <citation type="journal article" date="2003" name="DNA Res.">
        <title>Complete genome structure of Gloeobacter violaceus PCC 7421, a cyanobacterium that lacks thylakoids.</title>
        <authorList>
            <person name="Nakamura Y."/>
            <person name="Kaneko T."/>
            <person name="Sato S."/>
            <person name="Mimuro M."/>
            <person name="Miyashita H."/>
            <person name="Tsuchiya T."/>
            <person name="Sasamoto S."/>
            <person name="Watanabe A."/>
            <person name="Kawashima K."/>
            <person name="Kishida Y."/>
            <person name="Kiyokawa C."/>
            <person name="Kohara M."/>
            <person name="Matsumoto M."/>
            <person name="Matsuno A."/>
            <person name="Nakazaki N."/>
            <person name="Shimpo S."/>
            <person name="Takeuchi C."/>
            <person name="Yamada M."/>
            <person name="Tabata S."/>
        </authorList>
    </citation>
    <scope>NUCLEOTIDE SEQUENCE [LARGE SCALE GENOMIC DNA]</scope>
    <source>
        <strain>ATCC 29082 / PCC 7421</strain>
    </source>
</reference>
<protein>
    <recommendedName>
        <fullName evidence="1">Queuine tRNA-ribosyltransferase</fullName>
        <ecNumber evidence="1">2.4.2.29</ecNumber>
    </recommendedName>
    <alternativeName>
        <fullName evidence="1">Guanine insertion enzyme</fullName>
    </alternativeName>
    <alternativeName>
        <fullName evidence="1">tRNA-guanine transglycosylase</fullName>
    </alternativeName>
</protein>